<comment type="function">
    <text evidence="1">Putative antitoxin component of a possible type II toxin-antitoxin (TA) system. The cognate toxin is VapC16.</text>
</comment>
<organism>
    <name type="scientific">Mycobacterium tuberculosis (strain ATCC 25618 / H37Rv)</name>
    <dbReference type="NCBI Taxonomy" id="83332"/>
    <lineage>
        <taxon>Bacteria</taxon>
        <taxon>Bacillati</taxon>
        <taxon>Actinomycetota</taxon>
        <taxon>Actinomycetes</taxon>
        <taxon>Mycobacteriales</taxon>
        <taxon>Mycobacteriaceae</taxon>
        <taxon>Mycobacterium</taxon>
        <taxon>Mycobacterium tuberculosis complex</taxon>
    </lineage>
</organism>
<evidence type="ECO:0000305" key="1">
    <source>
    </source>
</evidence>
<protein>
    <recommendedName>
        <fullName>Putative antitoxin VapB16</fullName>
    </recommendedName>
</protein>
<gene>
    <name type="primary">vapB16</name>
    <name type="ordered locus">Rv2231B</name>
</gene>
<sequence length="58" mass="6509">MALWYQAMIAKFGEQVVDAKVWAPAKRVGVHEAKTRLSELLRLVYGGQRLRLPAAASR</sequence>
<proteinExistence type="predicted"/>
<dbReference type="EMBL" id="AL123456">
    <property type="protein sequence ID" value="CCP45011.1"/>
    <property type="molecule type" value="Genomic_DNA"/>
</dbReference>
<dbReference type="RefSeq" id="WP_003903810.1">
    <property type="nucleotide sequence ID" value="NZ_NVQJ01000008.1"/>
</dbReference>
<dbReference type="RefSeq" id="YP_007410918.1">
    <property type="nucleotide sequence ID" value="NC_000962.3"/>
</dbReference>
<dbReference type="SMR" id="P0CW31"/>
<dbReference type="PaxDb" id="83332-Rv2231B"/>
<dbReference type="GeneID" id="14515901"/>
<dbReference type="KEGG" id="mtu:Rv2231B"/>
<dbReference type="KEGG" id="mtv:RVBD_2231B"/>
<dbReference type="TubercuList" id="Rv2231B"/>
<dbReference type="InParanoid" id="P0CW31"/>
<dbReference type="Proteomes" id="UP000001584">
    <property type="component" value="Chromosome"/>
</dbReference>
<keyword id="KW-1185">Reference proteome</keyword>
<keyword id="KW-1277">Toxin-antitoxin system</keyword>
<feature type="chain" id="PRO_0000408062" description="Putative antitoxin VapB16">
    <location>
        <begin position="1"/>
        <end position="58"/>
    </location>
</feature>
<accession>P0CW31</accession>
<accession>L0TBW6</accession>
<reference key="1">
    <citation type="journal article" date="1998" name="Nature">
        <title>Deciphering the biology of Mycobacterium tuberculosis from the complete genome sequence.</title>
        <authorList>
            <person name="Cole S.T."/>
            <person name="Brosch R."/>
            <person name="Parkhill J."/>
            <person name="Garnier T."/>
            <person name="Churcher C.M."/>
            <person name="Harris D.E."/>
            <person name="Gordon S.V."/>
            <person name="Eiglmeier K."/>
            <person name="Gas S."/>
            <person name="Barry C.E. III"/>
            <person name="Tekaia F."/>
            <person name="Badcock K."/>
            <person name="Basham D."/>
            <person name="Brown D."/>
            <person name="Chillingworth T."/>
            <person name="Connor R."/>
            <person name="Davies R.M."/>
            <person name="Devlin K."/>
            <person name="Feltwell T."/>
            <person name="Gentles S."/>
            <person name="Hamlin N."/>
            <person name="Holroyd S."/>
            <person name="Hornsby T."/>
            <person name="Jagels K."/>
            <person name="Krogh A."/>
            <person name="McLean J."/>
            <person name="Moule S."/>
            <person name="Murphy L.D."/>
            <person name="Oliver S."/>
            <person name="Osborne J."/>
            <person name="Quail M.A."/>
            <person name="Rajandream M.A."/>
            <person name="Rogers J."/>
            <person name="Rutter S."/>
            <person name="Seeger K."/>
            <person name="Skelton S."/>
            <person name="Squares S."/>
            <person name="Squares R."/>
            <person name="Sulston J.E."/>
            <person name="Taylor K."/>
            <person name="Whitehead S."/>
            <person name="Barrell B.G."/>
        </authorList>
    </citation>
    <scope>NUCLEOTIDE SEQUENCE [LARGE SCALE GENOMIC DNA]</scope>
    <source>
        <strain>ATCC 25618 / H37Rv</strain>
    </source>
</reference>
<reference key="2">
    <citation type="journal article" date="2005" name="Nucleic Acids Res.">
        <title>Toxin-antitoxin loci are highly abundant in free-living but lost from host-associated prokaryotes.</title>
        <authorList>
            <person name="Pandey D.P."/>
            <person name="Gerdes K."/>
        </authorList>
    </citation>
    <scope>IDENTIFICATION</scope>
    <scope>POSSIBLE FUNCTION</scope>
    <source>
        <strain>ATCC 25618 / H37Rv</strain>
    </source>
</reference>
<name>VPB16_MYCTU</name>